<accession>Q93VR3</accession>
<evidence type="ECO:0000250" key="1"/>
<evidence type="ECO:0000269" key="2">
    <source>
    </source>
</evidence>
<evidence type="ECO:0000269" key="3">
    <source>
    </source>
</evidence>
<evidence type="ECO:0000269" key="4">
    <source>
    </source>
</evidence>
<evidence type="ECO:0000269" key="5">
    <source>
    </source>
</evidence>
<evidence type="ECO:0000305" key="6"/>
<evidence type="ECO:0007744" key="7">
    <source>
    </source>
</evidence>
<evidence type="ECO:0007744" key="8">
    <source>
    </source>
</evidence>
<evidence type="ECO:0007829" key="9">
    <source>
        <dbReference type="PDB" id="2C54"/>
    </source>
</evidence>
<evidence type="ECO:0007829" key="10">
    <source>
        <dbReference type="PDB" id="2C59"/>
    </source>
</evidence>
<evidence type="ECO:0007829" key="11">
    <source>
        <dbReference type="PDB" id="2C5A"/>
    </source>
</evidence>
<keyword id="KW-0002">3D-structure</keyword>
<keyword id="KW-0007">Acetylation</keyword>
<keyword id="KW-0060">Ascorbate biosynthesis</keyword>
<keyword id="KW-0413">Isomerase</keyword>
<keyword id="KW-0520">NAD</keyword>
<keyword id="KW-0547">Nucleotide-binding</keyword>
<keyword id="KW-0597">Phosphoprotein</keyword>
<keyword id="KW-1185">Reference proteome</keyword>
<dbReference type="EC" id="5.1.3.18" evidence="2 3"/>
<dbReference type="EMBL" id="AF272706">
    <property type="status" value="NOT_ANNOTATED_CDS"/>
    <property type="molecule type" value="Genomic_DNA"/>
</dbReference>
<dbReference type="EMBL" id="CP002688">
    <property type="protein sequence ID" value="AED93843.1"/>
    <property type="molecule type" value="Genomic_DNA"/>
</dbReference>
<dbReference type="EMBL" id="CP002688">
    <property type="protein sequence ID" value="AED93844.1"/>
    <property type="molecule type" value="Genomic_DNA"/>
</dbReference>
<dbReference type="EMBL" id="AY057660">
    <property type="protein sequence ID" value="AAL15291.1"/>
    <property type="molecule type" value="mRNA"/>
</dbReference>
<dbReference type="EMBL" id="AY057694">
    <property type="protein sequence ID" value="AAL15324.1"/>
    <property type="molecule type" value="mRNA"/>
</dbReference>
<dbReference type="EMBL" id="AY116953">
    <property type="protein sequence ID" value="AAM51587.1"/>
    <property type="molecule type" value="mRNA"/>
</dbReference>
<dbReference type="PDB" id="2C54">
    <property type="method" value="X-ray"/>
    <property type="resolution" value="1.50 A"/>
    <property type="chains" value="A/B=1-377"/>
</dbReference>
<dbReference type="PDB" id="2C59">
    <property type="method" value="X-ray"/>
    <property type="resolution" value="2.00 A"/>
    <property type="chains" value="A/B=1-377"/>
</dbReference>
<dbReference type="PDB" id="2C5A">
    <property type="method" value="X-ray"/>
    <property type="resolution" value="1.40 A"/>
    <property type="chains" value="A/B=1-377"/>
</dbReference>
<dbReference type="PDB" id="2C5E">
    <property type="method" value="X-ray"/>
    <property type="resolution" value="1.70 A"/>
    <property type="chains" value="A/B=1-377"/>
</dbReference>
<dbReference type="PDBsum" id="2C54"/>
<dbReference type="PDBsum" id="2C59"/>
<dbReference type="PDBsum" id="2C5A"/>
<dbReference type="PDBsum" id="2C5E"/>
<dbReference type="SMR" id="Q93VR3"/>
<dbReference type="BioGRID" id="18274">
    <property type="interactions" value="15"/>
</dbReference>
<dbReference type="FunCoup" id="Q93VR3">
    <property type="interactions" value="1037"/>
</dbReference>
<dbReference type="STRING" id="3702.Q93VR3"/>
<dbReference type="iPTMnet" id="Q93VR3"/>
<dbReference type="PaxDb" id="3702-AT5G28840.2"/>
<dbReference type="ProteomicsDB" id="248535"/>
<dbReference type="EnsemblPlants" id="AT5G28840.1">
    <property type="protein sequence ID" value="AT5G28840.1"/>
    <property type="gene ID" value="AT5G28840"/>
</dbReference>
<dbReference type="EnsemblPlants" id="AT5G28840.2">
    <property type="protein sequence ID" value="AT5G28840.2"/>
    <property type="gene ID" value="AT5G28840"/>
</dbReference>
<dbReference type="GeneID" id="833002"/>
<dbReference type="Gramene" id="AT5G28840.1">
    <property type="protein sequence ID" value="AT5G28840.1"/>
    <property type="gene ID" value="AT5G28840"/>
</dbReference>
<dbReference type="Gramene" id="AT5G28840.2">
    <property type="protein sequence ID" value="AT5G28840.2"/>
    <property type="gene ID" value="AT5G28840"/>
</dbReference>
<dbReference type="KEGG" id="ath:AT5G28840"/>
<dbReference type="Araport" id="AT5G28840"/>
<dbReference type="TAIR" id="AT5G28840">
    <property type="gene designation" value="GME"/>
</dbReference>
<dbReference type="eggNOG" id="KOG1429">
    <property type="taxonomic scope" value="Eukaryota"/>
</dbReference>
<dbReference type="HOGENOM" id="CLU_007383_4_2_1"/>
<dbReference type="InParanoid" id="Q93VR3"/>
<dbReference type="OMA" id="PDMTYGW"/>
<dbReference type="OrthoDB" id="1022576at2759"/>
<dbReference type="PhylomeDB" id="Q93VR3"/>
<dbReference type="BioCyc" id="ARA:AT5G28840-MONOMER"/>
<dbReference type="BioCyc" id="MetaCyc:AT5G28840-MONOMER"/>
<dbReference type="BRENDA" id="5.1.3.18">
    <property type="organism ID" value="399"/>
</dbReference>
<dbReference type="SABIO-RK" id="Q93VR3"/>
<dbReference type="UniPathway" id="UPA00990">
    <property type="reaction ID" value="UER00931"/>
</dbReference>
<dbReference type="CD-CODE" id="4299E36E">
    <property type="entry name" value="Nucleolus"/>
</dbReference>
<dbReference type="EvolutionaryTrace" id="Q93VR3"/>
<dbReference type="PRO" id="PR:Q93VR3"/>
<dbReference type="Proteomes" id="UP000006548">
    <property type="component" value="Chromosome 5"/>
</dbReference>
<dbReference type="ExpressionAtlas" id="Q93VR3">
    <property type="expression patterns" value="baseline and differential"/>
</dbReference>
<dbReference type="GO" id="GO:0005829">
    <property type="term" value="C:cytosol"/>
    <property type="evidence" value="ECO:0007005"/>
    <property type="project" value="TAIR"/>
</dbReference>
<dbReference type="GO" id="GO:0009536">
    <property type="term" value="C:plastid"/>
    <property type="evidence" value="ECO:0007005"/>
    <property type="project" value="TAIR"/>
</dbReference>
<dbReference type="GO" id="GO:0047918">
    <property type="term" value="F:GDP-mannose 3,5-epimerase activity"/>
    <property type="evidence" value="ECO:0000314"/>
    <property type="project" value="TAIR"/>
</dbReference>
<dbReference type="GO" id="GO:0051287">
    <property type="term" value="F:NAD binding"/>
    <property type="evidence" value="ECO:0000304"/>
    <property type="project" value="TAIR"/>
</dbReference>
<dbReference type="GO" id="GO:0019853">
    <property type="term" value="P:L-ascorbic acid biosynthetic process"/>
    <property type="evidence" value="ECO:0000304"/>
    <property type="project" value="TAIR"/>
</dbReference>
<dbReference type="CDD" id="cd05273">
    <property type="entry name" value="GME-like_SDR_e"/>
    <property type="match status" value="1"/>
</dbReference>
<dbReference type="Gene3D" id="3.40.50.720">
    <property type="entry name" value="NAD(P)-binding Rossmann-like Domain"/>
    <property type="match status" value="1"/>
</dbReference>
<dbReference type="Gene3D" id="3.90.25.10">
    <property type="entry name" value="UDP-galactose 4-epimerase, domain 1"/>
    <property type="match status" value="1"/>
</dbReference>
<dbReference type="InterPro" id="IPR001509">
    <property type="entry name" value="Epimerase_deHydtase"/>
</dbReference>
<dbReference type="InterPro" id="IPR033890">
    <property type="entry name" value="GDP-Man_epi"/>
</dbReference>
<dbReference type="InterPro" id="IPR036291">
    <property type="entry name" value="NAD(P)-bd_dom_sf"/>
</dbReference>
<dbReference type="PANTHER" id="PTHR43574">
    <property type="entry name" value="EPIMERASE-RELATED"/>
    <property type="match status" value="1"/>
</dbReference>
<dbReference type="Pfam" id="PF01370">
    <property type="entry name" value="Epimerase"/>
    <property type="match status" value="1"/>
</dbReference>
<dbReference type="SUPFAM" id="SSF51735">
    <property type="entry name" value="NAD(P)-binding Rossmann-fold domains"/>
    <property type="match status" value="1"/>
</dbReference>
<feature type="initiator methionine" description="Removed" evidence="8">
    <location>
        <position position="1"/>
    </location>
</feature>
<feature type="chain" id="PRO_0000183267" description="GDP-mannose 3,5-epimerase">
    <location>
        <begin position="2"/>
        <end position="377"/>
    </location>
</feature>
<feature type="active site" description="Proton acceptor" evidence="1">
    <location>
        <position position="174"/>
    </location>
</feature>
<feature type="binding site" evidence="4">
    <location>
        <begin position="34"/>
        <end position="60"/>
    </location>
    <ligand>
        <name>NAD(+)</name>
        <dbReference type="ChEBI" id="CHEBI:57540"/>
    </ligand>
</feature>
<feature type="binding site" evidence="4">
    <location>
        <position position="58"/>
    </location>
    <ligand>
        <name>NAD(+)</name>
        <dbReference type="ChEBI" id="CHEBI:57540"/>
    </ligand>
</feature>
<feature type="binding site" evidence="4">
    <location>
        <position position="78"/>
    </location>
    <ligand>
        <name>NAD(+)</name>
        <dbReference type="ChEBI" id="CHEBI:57540"/>
    </ligand>
</feature>
<feature type="binding site">
    <location>
        <position position="103"/>
    </location>
    <ligand>
        <name>substrate</name>
    </ligand>
</feature>
<feature type="binding site">
    <location>
        <begin position="143"/>
        <end position="145"/>
    </location>
    <ligand>
        <name>substrate</name>
    </ligand>
</feature>
<feature type="binding site" evidence="4">
    <location>
        <position position="174"/>
    </location>
    <ligand>
        <name>NAD(+)</name>
        <dbReference type="ChEBI" id="CHEBI:57540"/>
    </ligand>
</feature>
<feature type="binding site" evidence="4">
    <location>
        <position position="178"/>
    </location>
    <ligand>
        <name>NAD(+)</name>
        <dbReference type="ChEBI" id="CHEBI:57540"/>
    </ligand>
</feature>
<feature type="binding site">
    <location>
        <position position="203"/>
    </location>
    <ligand>
        <name>substrate</name>
    </ligand>
</feature>
<feature type="binding site">
    <location>
        <begin position="216"/>
        <end position="218"/>
    </location>
    <ligand>
        <name>substrate</name>
    </ligand>
</feature>
<feature type="binding site">
    <location>
        <position position="225"/>
    </location>
    <ligand>
        <name>substrate</name>
    </ligand>
</feature>
<feature type="binding site">
    <location>
        <begin position="241"/>
        <end position="243"/>
    </location>
    <ligand>
        <name>substrate</name>
    </ligand>
</feature>
<feature type="binding site">
    <location>
        <position position="306"/>
    </location>
    <ligand>
        <name>substrate</name>
    </ligand>
</feature>
<feature type="binding site">
    <location>
        <position position="356"/>
    </location>
    <ligand>
        <name>substrate</name>
    </ligand>
</feature>
<feature type="modified residue" description="N-acetylglycine" evidence="8">
    <location>
        <position position="2"/>
    </location>
</feature>
<feature type="modified residue" description="Phosphoserine" evidence="7">
    <location>
        <position position="369"/>
    </location>
</feature>
<feature type="mutagenesis site" description="Loss of activity." evidence="4">
    <original>C</original>
    <variation>A</variation>
    <location>
        <position position="145"/>
    </location>
</feature>
<feature type="mutagenesis site" description="Strong reduction of activity." evidence="4">
    <original>C</original>
    <variation>S</variation>
    <location>
        <position position="145"/>
    </location>
</feature>
<feature type="mutagenesis site" description="Loss of activity." evidence="4">
    <original>Y</original>
    <variation>F</variation>
    <location>
        <position position="174"/>
    </location>
</feature>
<feature type="mutagenesis site" description="Strong reduction of activity." evidence="4">
    <original>K</original>
    <variation>R</variation>
    <location>
        <position position="178"/>
    </location>
</feature>
<feature type="mutagenesis site" description="Loss of activity." evidence="4">
    <original>K</original>
    <variation>A</variation>
    <location>
        <position position="217"/>
    </location>
</feature>
<feature type="mutagenesis site" description="Strong reduction of activity." evidence="4">
    <original>R</original>
    <variation>A</variation>
    <location>
        <position position="306"/>
    </location>
</feature>
<feature type="strand" evidence="11">
    <location>
        <begin position="29"/>
        <end position="33"/>
    </location>
</feature>
<feature type="turn" evidence="11">
    <location>
        <begin position="34"/>
        <end position="36"/>
    </location>
</feature>
<feature type="helix" evidence="11">
    <location>
        <begin position="38"/>
        <end position="49"/>
    </location>
</feature>
<feature type="strand" evidence="11">
    <location>
        <begin position="53"/>
        <end position="60"/>
    </location>
</feature>
<feature type="strand" evidence="11">
    <location>
        <begin position="63"/>
        <end position="65"/>
    </location>
</feature>
<feature type="helix" evidence="11">
    <location>
        <begin position="67"/>
        <end position="69"/>
    </location>
</feature>
<feature type="strand" evidence="11">
    <location>
        <begin position="72"/>
        <end position="76"/>
    </location>
</feature>
<feature type="helix" evidence="11">
    <location>
        <begin position="82"/>
        <end position="89"/>
    </location>
</feature>
<feature type="strand" evidence="11">
    <location>
        <begin position="93"/>
        <end position="97"/>
    </location>
</feature>
<feature type="helix" evidence="11">
    <location>
        <begin position="105"/>
        <end position="108"/>
    </location>
</feature>
<feature type="helix" evidence="11">
    <location>
        <begin position="112"/>
        <end position="132"/>
    </location>
</feature>
<feature type="strand" evidence="11">
    <location>
        <begin position="136"/>
        <end position="143"/>
    </location>
</feature>
<feature type="helix" evidence="11">
    <location>
        <begin position="144"/>
        <end position="146"/>
    </location>
</feature>
<feature type="helix" evidence="11">
    <location>
        <begin position="149"/>
        <end position="151"/>
    </location>
</feature>
<feature type="strand" evidence="11">
    <location>
        <begin position="152"/>
        <end position="157"/>
    </location>
</feature>
<feature type="helix" evidence="11">
    <location>
        <begin position="162"/>
        <end position="165"/>
    </location>
</feature>
<feature type="strand" evidence="11">
    <location>
        <begin position="166"/>
        <end position="168"/>
    </location>
</feature>
<feature type="strand" evidence="9">
    <location>
        <begin position="170"/>
        <end position="172"/>
    </location>
</feature>
<feature type="helix" evidence="11">
    <location>
        <begin position="173"/>
        <end position="192"/>
    </location>
</feature>
<feature type="strand" evidence="11">
    <location>
        <begin position="195"/>
        <end position="201"/>
    </location>
</feature>
<feature type="strand" evidence="11">
    <location>
        <begin position="212"/>
        <end position="214"/>
    </location>
</feature>
<feature type="helix" evidence="11">
    <location>
        <begin position="218"/>
        <end position="228"/>
    </location>
</feature>
<feature type="strand" evidence="11">
    <location>
        <begin position="233"/>
        <end position="237"/>
    </location>
</feature>
<feature type="strand" evidence="10">
    <location>
        <begin position="242"/>
        <end position="244"/>
    </location>
</feature>
<feature type="helix" evidence="11">
    <location>
        <begin position="248"/>
        <end position="260"/>
    </location>
</feature>
<feature type="strand" evidence="11">
    <location>
        <begin position="267"/>
        <end position="269"/>
    </location>
</feature>
<feature type="strand" evidence="10">
    <location>
        <begin position="274"/>
        <end position="276"/>
    </location>
</feature>
<feature type="helix" evidence="11">
    <location>
        <begin position="277"/>
        <end position="286"/>
    </location>
</feature>
<feature type="turn" evidence="11">
    <location>
        <begin position="287"/>
        <end position="289"/>
    </location>
</feature>
<feature type="strand" evidence="11">
    <location>
        <begin position="294"/>
        <end position="297"/>
    </location>
</feature>
<feature type="helix" evidence="11">
    <location>
        <begin position="311"/>
        <end position="317"/>
    </location>
</feature>
<feature type="helix" evidence="11">
    <location>
        <begin position="325"/>
        <end position="346"/>
    </location>
</feature>
<feature type="helix" evidence="11">
    <location>
        <begin position="350"/>
        <end position="354"/>
    </location>
</feature>
<name>GME_ARATH</name>
<protein>
    <recommendedName>
        <fullName>GDP-mannose 3,5-epimerase</fullName>
        <shortName>GDP-Man 3,5-epimerase</shortName>
        <ecNumber evidence="2 3">5.1.3.18</ecNumber>
    </recommendedName>
</protein>
<organism>
    <name type="scientific">Arabidopsis thaliana</name>
    <name type="common">Mouse-ear cress</name>
    <dbReference type="NCBI Taxonomy" id="3702"/>
    <lineage>
        <taxon>Eukaryota</taxon>
        <taxon>Viridiplantae</taxon>
        <taxon>Streptophyta</taxon>
        <taxon>Embryophyta</taxon>
        <taxon>Tracheophyta</taxon>
        <taxon>Spermatophyta</taxon>
        <taxon>Magnoliopsida</taxon>
        <taxon>eudicotyledons</taxon>
        <taxon>Gunneridae</taxon>
        <taxon>Pentapetalae</taxon>
        <taxon>rosids</taxon>
        <taxon>malvids</taxon>
        <taxon>Brassicales</taxon>
        <taxon>Brassicaceae</taxon>
        <taxon>Camelineae</taxon>
        <taxon>Arabidopsis</taxon>
    </lineage>
</organism>
<reference key="1">
    <citation type="journal article" date="2000" name="Nature">
        <title>Sequence and analysis of chromosome 5 of the plant Arabidopsis thaliana.</title>
        <authorList>
            <person name="Tabata S."/>
            <person name="Kaneko T."/>
            <person name="Nakamura Y."/>
            <person name="Kotani H."/>
            <person name="Kato T."/>
            <person name="Asamizu E."/>
            <person name="Miyajima N."/>
            <person name="Sasamoto S."/>
            <person name="Kimura T."/>
            <person name="Hosouchi T."/>
            <person name="Kawashima K."/>
            <person name="Kohara M."/>
            <person name="Matsumoto M."/>
            <person name="Matsuno A."/>
            <person name="Muraki A."/>
            <person name="Nakayama S."/>
            <person name="Nakazaki N."/>
            <person name="Naruo K."/>
            <person name="Okumura S."/>
            <person name="Shinpo S."/>
            <person name="Takeuchi C."/>
            <person name="Wada T."/>
            <person name="Watanabe A."/>
            <person name="Yamada M."/>
            <person name="Yasuda M."/>
            <person name="Sato S."/>
            <person name="de la Bastide M."/>
            <person name="Huang E."/>
            <person name="Spiegel L."/>
            <person name="Gnoj L."/>
            <person name="O'Shaughnessy A."/>
            <person name="Preston R."/>
            <person name="Habermann K."/>
            <person name="Murray J."/>
            <person name="Johnson D."/>
            <person name="Rohlfing T."/>
            <person name="Nelson J."/>
            <person name="Stoneking T."/>
            <person name="Pepin K."/>
            <person name="Spieth J."/>
            <person name="Sekhon M."/>
            <person name="Armstrong J."/>
            <person name="Becker M."/>
            <person name="Belter E."/>
            <person name="Cordum H."/>
            <person name="Cordes M."/>
            <person name="Courtney L."/>
            <person name="Courtney W."/>
            <person name="Dante M."/>
            <person name="Du H."/>
            <person name="Edwards J."/>
            <person name="Fryman J."/>
            <person name="Haakensen B."/>
            <person name="Lamar E."/>
            <person name="Latreille P."/>
            <person name="Leonard S."/>
            <person name="Meyer R."/>
            <person name="Mulvaney E."/>
            <person name="Ozersky P."/>
            <person name="Riley A."/>
            <person name="Strowmatt C."/>
            <person name="Wagner-McPherson C."/>
            <person name="Wollam A."/>
            <person name="Yoakum M."/>
            <person name="Bell M."/>
            <person name="Dedhia N."/>
            <person name="Parnell L."/>
            <person name="Shah R."/>
            <person name="Rodriguez M."/>
            <person name="Hoon See L."/>
            <person name="Vil D."/>
            <person name="Baker J."/>
            <person name="Kirchoff K."/>
            <person name="Toth K."/>
            <person name="King L."/>
            <person name="Bahret A."/>
            <person name="Miller B."/>
            <person name="Marra M.A."/>
            <person name="Martienssen R."/>
            <person name="McCombie W.R."/>
            <person name="Wilson R.K."/>
            <person name="Murphy G."/>
            <person name="Bancroft I."/>
            <person name="Volckaert G."/>
            <person name="Wambutt R."/>
            <person name="Duesterhoeft A."/>
            <person name="Stiekema W."/>
            <person name="Pohl T."/>
            <person name="Entian K.-D."/>
            <person name="Terryn N."/>
            <person name="Hartley N."/>
            <person name="Bent E."/>
            <person name="Johnson S."/>
            <person name="Langham S.-A."/>
            <person name="McCullagh B."/>
            <person name="Robben J."/>
            <person name="Grymonprez B."/>
            <person name="Zimmermann W."/>
            <person name="Ramsperger U."/>
            <person name="Wedler H."/>
            <person name="Balke K."/>
            <person name="Wedler E."/>
            <person name="Peters S."/>
            <person name="van Staveren M."/>
            <person name="Dirkse W."/>
            <person name="Mooijman P."/>
            <person name="Klein Lankhorst R."/>
            <person name="Weitzenegger T."/>
            <person name="Bothe G."/>
            <person name="Rose M."/>
            <person name="Hauf J."/>
            <person name="Berneiser S."/>
            <person name="Hempel S."/>
            <person name="Feldpausch M."/>
            <person name="Lamberth S."/>
            <person name="Villarroel R."/>
            <person name="Gielen J."/>
            <person name="Ardiles W."/>
            <person name="Bents O."/>
            <person name="Lemcke K."/>
            <person name="Kolesov G."/>
            <person name="Mayer K.F.X."/>
            <person name="Rudd S."/>
            <person name="Schoof H."/>
            <person name="Schueller C."/>
            <person name="Zaccaria P."/>
            <person name="Mewes H.-W."/>
            <person name="Bevan M."/>
            <person name="Fransz P.F."/>
        </authorList>
    </citation>
    <scope>NUCLEOTIDE SEQUENCE [LARGE SCALE GENOMIC DNA]</scope>
    <source>
        <strain>cv. Columbia</strain>
    </source>
</reference>
<reference key="2">
    <citation type="journal article" date="2017" name="Plant J.">
        <title>Araport11: a complete reannotation of the Arabidopsis thaliana reference genome.</title>
        <authorList>
            <person name="Cheng C.Y."/>
            <person name="Krishnakumar V."/>
            <person name="Chan A.P."/>
            <person name="Thibaud-Nissen F."/>
            <person name="Schobel S."/>
            <person name="Town C.D."/>
        </authorList>
    </citation>
    <scope>GENOME REANNOTATION</scope>
    <source>
        <strain>cv. Columbia</strain>
    </source>
</reference>
<reference key="3">
    <citation type="journal article" date="2003" name="Science">
        <title>Empirical analysis of transcriptional activity in the Arabidopsis genome.</title>
        <authorList>
            <person name="Yamada K."/>
            <person name="Lim J."/>
            <person name="Dale J.M."/>
            <person name="Chen H."/>
            <person name="Shinn P."/>
            <person name="Palm C.J."/>
            <person name="Southwick A.M."/>
            <person name="Wu H.C."/>
            <person name="Kim C.J."/>
            <person name="Nguyen M."/>
            <person name="Pham P.K."/>
            <person name="Cheuk R.F."/>
            <person name="Karlin-Newmann G."/>
            <person name="Liu S.X."/>
            <person name="Lam B."/>
            <person name="Sakano H."/>
            <person name="Wu T."/>
            <person name="Yu G."/>
            <person name="Miranda M."/>
            <person name="Quach H.L."/>
            <person name="Tripp M."/>
            <person name="Chang C.H."/>
            <person name="Lee J.M."/>
            <person name="Toriumi M.J."/>
            <person name="Chan M.M."/>
            <person name="Tang C.C."/>
            <person name="Onodera C.S."/>
            <person name="Deng J.M."/>
            <person name="Akiyama K."/>
            <person name="Ansari Y."/>
            <person name="Arakawa T."/>
            <person name="Banh J."/>
            <person name="Banno F."/>
            <person name="Bowser L."/>
            <person name="Brooks S.Y."/>
            <person name="Carninci P."/>
            <person name="Chao Q."/>
            <person name="Choy N."/>
            <person name="Enju A."/>
            <person name="Goldsmith A.D."/>
            <person name="Gurjal M."/>
            <person name="Hansen N.F."/>
            <person name="Hayashizaki Y."/>
            <person name="Johnson-Hopson C."/>
            <person name="Hsuan V.W."/>
            <person name="Iida K."/>
            <person name="Karnes M."/>
            <person name="Khan S."/>
            <person name="Koesema E."/>
            <person name="Ishida J."/>
            <person name="Jiang P.X."/>
            <person name="Jones T."/>
            <person name="Kawai J."/>
            <person name="Kamiya A."/>
            <person name="Meyers C."/>
            <person name="Nakajima M."/>
            <person name="Narusaka M."/>
            <person name="Seki M."/>
            <person name="Sakurai T."/>
            <person name="Satou M."/>
            <person name="Tamse R."/>
            <person name="Vaysberg M."/>
            <person name="Wallender E.K."/>
            <person name="Wong C."/>
            <person name="Yamamura Y."/>
            <person name="Yuan S."/>
            <person name="Shinozaki K."/>
            <person name="Davis R.W."/>
            <person name="Theologis A."/>
            <person name="Ecker J.R."/>
        </authorList>
    </citation>
    <scope>NUCLEOTIDE SEQUENCE [LARGE SCALE MRNA]</scope>
    <source>
        <strain>cv. Columbia</strain>
    </source>
</reference>
<reference key="4">
    <citation type="journal article" date="1998" name="Nature">
        <title>The biosynthetic pathway of vitamin C in higher plants.</title>
        <authorList>
            <person name="Wheeler G.L."/>
            <person name="Jones M.A."/>
            <person name="Smirnoff N."/>
        </authorList>
    </citation>
    <scope>PATHWAY</scope>
</reference>
<reference key="5">
    <citation type="journal article" date="2001" name="Proc. Natl. Acad. Sci. U.S.A.">
        <title>Partial purification and identification of GDP-mannose 3',5'-epimerase of Arabidopsis thaliana, a key enzyme of the plant vitamin C pathway.</title>
        <authorList>
            <person name="Wolucka B.A."/>
            <person name="Persiau G."/>
            <person name="Van Doorsselaere J."/>
            <person name="Davey M.W."/>
            <person name="Demol H."/>
            <person name="Vandekerckhove J."/>
            <person name="Van Montagu M."/>
            <person name="Zabeau M."/>
            <person name="Boerjan W."/>
        </authorList>
    </citation>
    <scope>IDENTIFICATION BY MASS SPECTROMETRY</scope>
    <scope>ENZYME ACTIVITY</scope>
    <scope>COFACTOR</scope>
    <scope>SUBUNIT</scope>
    <scope>INTERACTION WITH HSC70-3</scope>
</reference>
<reference key="6">
    <citation type="journal article" date="2003" name="J. Biol. Chem.">
        <title>GDP-mannose 3',5'-epimerase forms GDP-L-gulose, a putative intermediate for the de novo biosynthesis of vitamin C in plants.</title>
        <authorList>
            <person name="Wolucka B.A."/>
            <person name="Van Montagu M."/>
        </authorList>
    </citation>
    <scope>FUNCTION</scope>
    <scope>ENZYME ACTIVITY</scope>
    <scope>ACTIVITY REGULATION</scope>
    <scope>BIOPHYSICOCHEMICAL PROPERTIES</scope>
</reference>
<reference key="7">
    <citation type="journal article" date="2009" name="Plant Physiol.">
        <title>Large-scale Arabidopsis phosphoproteome profiling reveals novel chloroplast kinase substrates and phosphorylation networks.</title>
        <authorList>
            <person name="Reiland S."/>
            <person name="Messerli G."/>
            <person name="Baerenfaller K."/>
            <person name="Gerrits B."/>
            <person name="Endler A."/>
            <person name="Grossmann J."/>
            <person name="Gruissem W."/>
            <person name="Baginsky S."/>
        </authorList>
    </citation>
    <scope>PHOSPHORYLATION [LARGE SCALE ANALYSIS] AT SER-369</scope>
    <scope>IDENTIFICATION BY MASS SPECTROMETRY [LARGE SCALE ANALYSIS]</scope>
</reference>
<reference key="8">
    <citation type="journal article" date="2012" name="Mol. Cell. Proteomics">
        <title>Comparative large-scale characterisation of plant vs. mammal proteins reveals similar and idiosyncratic N-alpha acetylation features.</title>
        <authorList>
            <person name="Bienvenut W.V."/>
            <person name="Sumpton D."/>
            <person name="Martinez A."/>
            <person name="Lilla S."/>
            <person name="Espagne C."/>
            <person name="Meinnel T."/>
            <person name="Giglione C."/>
        </authorList>
    </citation>
    <scope>ACETYLATION [LARGE SCALE ANALYSIS] AT GLY-2</scope>
    <scope>CLEAVAGE OF INITIATOR METHIONINE [LARGE SCALE ANALYSIS]</scope>
    <scope>IDENTIFICATION BY MASS SPECTROMETRY [LARGE SCALE ANALYSIS]</scope>
</reference>
<reference key="9">
    <citation type="journal article" date="2005" name="J. Am. Chem. Soc.">
        <title>Structure and function of GDP-mannose-3',5'-epimerase: an enzyme which performs three chemical reactions at the same active site.</title>
        <authorList>
            <person name="Major L.L."/>
            <person name="Wolucka B.A."/>
            <person name="Naismith J.H."/>
        </authorList>
    </citation>
    <scope>X-RAY CRYSTALLOGRAPHY (1.4 ANGSTROMS) OF 1-377 IN COMPLEX WITH NAD AND SUBSTRATES</scope>
    <scope>SUBUNIT</scope>
    <scope>MUTAGENESIS OF CYS-145; TYR-174; LYS-178; LYS-217 AND ARG-306</scope>
</reference>
<sequence length="377" mass="42758">MGTTNGTDYGAYTYKELEREQYWPSENLKISITGAGGFIASHIARRLKHEGHYVIASDWKKNEHMTEDMFCDEFHLVDLRVMENCLKVTEGVDHVFNLAADMGGMGFIQSNHSVIMYNNTMISFNMIEAARINGIKRFFYASSACIYPEFKQLETTNVSLKESDAWPAEPQDAYGLEKLATEELCKHYNKDFGIECRIGRFHNIYGPFGTWKGGREKAPAAFCRKAQTSTDRFEMWGDGLQTRSFTFIDECVEGVLRLTKSDFREPVNIGSDEMVSMNEMAEMVLSFEEKKLPIHHIPGPEGVRGRNSDNNLIKEKLGWAPNMRLKEGLRITYFWIKEQIEKEKAKGSDVSLYGSSKVVGTQAPVQLGSLRAADGKE</sequence>
<proteinExistence type="evidence at protein level"/>
<comment type="function">
    <text evidence="3">Catalyzes a reversible epimerization of GDP-D-mannose that precedes the committed step in the biosynthesis of vitamin C (L-ascorbate), resulting in the hydrolysis of the highly energetic glycosyl-pyrophosphoryl linkage. Able to catalyze 2 distinct epimerization reactions and can release both GDP-L-galactose and GDP-L-gulose from GDP-mannose.</text>
</comment>
<comment type="catalytic activity">
    <reaction evidence="2 3">
        <text>GDP-alpha-D-mannose = GDP-beta-L-gulose</text>
        <dbReference type="Rhea" id="RHEA:63800"/>
        <dbReference type="ChEBI" id="CHEBI:57527"/>
        <dbReference type="ChEBI" id="CHEBI:149550"/>
        <dbReference type="EC" id="5.1.3.18"/>
    </reaction>
</comment>
<comment type="catalytic activity">
    <reaction evidence="2 3">
        <text>GDP-beta-L-gulose = GDP-beta-L-galactose</text>
        <dbReference type="Rhea" id="RHEA:63804"/>
        <dbReference type="ChEBI" id="CHEBI:61454"/>
        <dbReference type="ChEBI" id="CHEBI:149550"/>
        <dbReference type="EC" id="5.1.3.18"/>
    </reaction>
</comment>
<comment type="cofactor">
    <cofactor evidence="2">
        <name>NAD(+)</name>
        <dbReference type="ChEBI" id="CHEBI:57540"/>
    </cofactor>
</comment>
<comment type="activity regulation">
    <text evidence="3">Inhibited by GDP and GDP-D-glucose.</text>
</comment>
<comment type="biophysicochemical properties">
    <kinetics>
        <KM evidence="3">4.5 uM for GDP-mannose</KM>
        <Vmax evidence="3">1.76 umol/h/mg enzyme with GDP-mannose as substrate</Vmax>
    </kinetics>
</comment>
<comment type="pathway">
    <text evidence="5">Cofactor biosynthesis; L-ascorbate biosynthesis via GDP-alpha-D-mannose pathway; L-ascorbate from GDP-alpha-D-mannose: step 1/5.</text>
</comment>
<comment type="subunit">
    <text evidence="2 4">Homodimer. Interacts with chaperone Hsc70-3 protein, which may regulate epimerase activity.</text>
</comment>
<comment type="similarity">
    <text evidence="6">Belongs to the NAD(P)-dependent epimerase/dehydratase family.</text>
</comment>
<gene>
    <name type="ordered locus">At5g28840</name>
    <name type="ORF">F7P1.20</name>
</gene>